<gene>
    <name evidence="1" type="primary">rnhB</name>
    <name type="ordered locus">Saro_1839</name>
</gene>
<dbReference type="EC" id="3.1.26.4" evidence="1"/>
<dbReference type="EMBL" id="CP000248">
    <property type="protein sequence ID" value="ABD26279.1"/>
    <property type="molecule type" value="Genomic_DNA"/>
</dbReference>
<dbReference type="RefSeq" id="WP_011445489.1">
    <property type="nucleotide sequence ID" value="NC_007794.1"/>
</dbReference>
<dbReference type="SMR" id="Q2G794"/>
<dbReference type="STRING" id="279238.Saro_1839"/>
<dbReference type="KEGG" id="nar:Saro_1839"/>
<dbReference type="eggNOG" id="COG0164">
    <property type="taxonomic scope" value="Bacteria"/>
</dbReference>
<dbReference type="HOGENOM" id="CLU_036532_3_2_5"/>
<dbReference type="Proteomes" id="UP000009134">
    <property type="component" value="Chromosome"/>
</dbReference>
<dbReference type="GO" id="GO:0005737">
    <property type="term" value="C:cytoplasm"/>
    <property type="evidence" value="ECO:0007669"/>
    <property type="project" value="UniProtKB-SubCell"/>
</dbReference>
<dbReference type="GO" id="GO:0032299">
    <property type="term" value="C:ribonuclease H2 complex"/>
    <property type="evidence" value="ECO:0007669"/>
    <property type="project" value="TreeGrafter"/>
</dbReference>
<dbReference type="GO" id="GO:0030145">
    <property type="term" value="F:manganese ion binding"/>
    <property type="evidence" value="ECO:0007669"/>
    <property type="project" value="UniProtKB-UniRule"/>
</dbReference>
<dbReference type="GO" id="GO:0003723">
    <property type="term" value="F:RNA binding"/>
    <property type="evidence" value="ECO:0007669"/>
    <property type="project" value="InterPro"/>
</dbReference>
<dbReference type="GO" id="GO:0004523">
    <property type="term" value="F:RNA-DNA hybrid ribonuclease activity"/>
    <property type="evidence" value="ECO:0007669"/>
    <property type="project" value="UniProtKB-UniRule"/>
</dbReference>
<dbReference type="GO" id="GO:0043137">
    <property type="term" value="P:DNA replication, removal of RNA primer"/>
    <property type="evidence" value="ECO:0007669"/>
    <property type="project" value="TreeGrafter"/>
</dbReference>
<dbReference type="GO" id="GO:0006298">
    <property type="term" value="P:mismatch repair"/>
    <property type="evidence" value="ECO:0007669"/>
    <property type="project" value="TreeGrafter"/>
</dbReference>
<dbReference type="CDD" id="cd07182">
    <property type="entry name" value="RNase_HII_bacteria_HII_like"/>
    <property type="match status" value="1"/>
</dbReference>
<dbReference type="Gene3D" id="3.30.420.10">
    <property type="entry name" value="Ribonuclease H-like superfamily/Ribonuclease H"/>
    <property type="match status" value="1"/>
</dbReference>
<dbReference type="HAMAP" id="MF_00052_B">
    <property type="entry name" value="RNase_HII_B"/>
    <property type="match status" value="1"/>
</dbReference>
<dbReference type="InterPro" id="IPR022898">
    <property type="entry name" value="RNase_HII"/>
</dbReference>
<dbReference type="InterPro" id="IPR001352">
    <property type="entry name" value="RNase_HII/HIII"/>
</dbReference>
<dbReference type="InterPro" id="IPR024567">
    <property type="entry name" value="RNase_HII/HIII_dom"/>
</dbReference>
<dbReference type="InterPro" id="IPR012337">
    <property type="entry name" value="RNaseH-like_sf"/>
</dbReference>
<dbReference type="InterPro" id="IPR036397">
    <property type="entry name" value="RNaseH_sf"/>
</dbReference>
<dbReference type="NCBIfam" id="NF000595">
    <property type="entry name" value="PRK00015.1-3"/>
    <property type="match status" value="1"/>
</dbReference>
<dbReference type="PANTHER" id="PTHR10954">
    <property type="entry name" value="RIBONUCLEASE H2 SUBUNIT A"/>
    <property type="match status" value="1"/>
</dbReference>
<dbReference type="PANTHER" id="PTHR10954:SF18">
    <property type="entry name" value="RIBONUCLEASE HII"/>
    <property type="match status" value="1"/>
</dbReference>
<dbReference type="Pfam" id="PF01351">
    <property type="entry name" value="RNase_HII"/>
    <property type="match status" value="1"/>
</dbReference>
<dbReference type="SUPFAM" id="SSF53098">
    <property type="entry name" value="Ribonuclease H-like"/>
    <property type="match status" value="1"/>
</dbReference>
<dbReference type="PROSITE" id="PS51975">
    <property type="entry name" value="RNASE_H_2"/>
    <property type="match status" value="1"/>
</dbReference>
<proteinExistence type="inferred from homology"/>
<comment type="function">
    <text evidence="1">Endonuclease that specifically degrades the RNA of RNA-DNA hybrids.</text>
</comment>
<comment type="catalytic activity">
    <reaction evidence="1">
        <text>Endonucleolytic cleavage to 5'-phosphomonoester.</text>
        <dbReference type="EC" id="3.1.26.4"/>
    </reaction>
</comment>
<comment type="cofactor">
    <cofactor evidence="1">
        <name>Mn(2+)</name>
        <dbReference type="ChEBI" id="CHEBI:29035"/>
    </cofactor>
    <cofactor evidence="1">
        <name>Mg(2+)</name>
        <dbReference type="ChEBI" id="CHEBI:18420"/>
    </cofactor>
    <text evidence="1">Manganese or magnesium. Binds 1 divalent metal ion per monomer in the absence of substrate. May bind a second metal ion after substrate binding.</text>
</comment>
<comment type="subcellular location">
    <subcellularLocation>
        <location evidence="1">Cytoplasm</location>
    </subcellularLocation>
</comment>
<comment type="similarity">
    <text evidence="1">Belongs to the RNase HII family.</text>
</comment>
<evidence type="ECO:0000255" key="1">
    <source>
        <dbReference type="HAMAP-Rule" id="MF_00052"/>
    </source>
</evidence>
<evidence type="ECO:0000255" key="2">
    <source>
        <dbReference type="PROSITE-ProRule" id="PRU01319"/>
    </source>
</evidence>
<name>RNH2_NOVAD</name>
<reference key="1">
    <citation type="submission" date="2006-01" db="EMBL/GenBank/DDBJ databases">
        <title>Complete sequence of Novosphingobium aromaticivorans DSM 12444.</title>
        <authorList>
            <consortium name="US DOE Joint Genome Institute"/>
            <person name="Copeland A."/>
            <person name="Lucas S."/>
            <person name="Lapidus A."/>
            <person name="Barry K."/>
            <person name="Detter J.C."/>
            <person name="Glavina T."/>
            <person name="Hammon N."/>
            <person name="Israni S."/>
            <person name="Pitluck S."/>
            <person name="Chain P."/>
            <person name="Malfatti S."/>
            <person name="Shin M."/>
            <person name="Vergez L."/>
            <person name="Schmutz J."/>
            <person name="Larimer F."/>
            <person name="Land M."/>
            <person name="Kyrpides N."/>
            <person name="Ivanova N."/>
            <person name="Fredrickson J."/>
            <person name="Balkwill D."/>
            <person name="Romine M.F."/>
            <person name="Richardson P."/>
        </authorList>
    </citation>
    <scope>NUCLEOTIDE SEQUENCE [LARGE SCALE GENOMIC DNA]</scope>
    <source>
        <strain>ATCC 700278 / DSM 12444 / CCUG 56034 / CIP 105152 / NBRC 16084 / F199</strain>
    </source>
</reference>
<organism>
    <name type="scientific">Novosphingobium aromaticivorans (strain ATCC 700278 / DSM 12444 / CCUG 56034 / CIP 105152 / NBRC 16084 / F199)</name>
    <dbReference type="NCBI Taxonomy" id="279238"/>
    <lineage>
        <taxon>Bacteria</taxon>
        <taxon>Pseudomonadati</taxon>
        <taxon>Pseudomonadota</taxon>
        <taxon>Alphaproteobacteria</taxon>
        <taxon>Sphingomonadales</taxon>
        <taxon>Sphingomonadaceae</taxon>
        <taxon>Novosphingobium</taxon>
    </lineage>
</organism>
<protein>
    <recommendedName>
        <fullName evidence="1">Ribonuclease HII</fullName>
        <shortName evidence="1">RNase HII</shortName>
        <ecNumber evidence="1">3.1.26.4</ecNumber>
    </recommendedName>
</protein>
<accession>Q2G794</accession>
<feature type="chain" id="PRO_0000235744" description="Ribonuclease HII">
    <location>
        <begin position="1"/>
        <end position="196"/>
    </location>
</feature>
<feature type="domain" description="RNase H type-2" evidence="2">
    <location>
        <begin position="1"/>
        <end position="196"/>
    </location>
</feature>
<feature type="binding site" evidence="1">
    <location>
        <position position="7"/>
    </location>
    <ligand>
        <name>a divalent metal cation</name>
        <dbReference type="ChEBI" id="CHEBI:60240"/>
    </ligand>
</feature>
<feature type="binding site" evidence="1">
    <location>
        <position position="8"/>
    </location>
    <ligand>
        <name>a divalent metal cation</name>
        <dbReference type="ChEBI" id="CHEBI:60240"/>
    </ligand>
</feature>
<feature type="binding site" evidence="1">
    <location>
        <position position="103"/>
    </location>
    <ligand>
        <name>a divalent metal cation</name>
        <dbReference type="ChEBI" id="CHEBI:60240"/>
    </ligand>
</feature>
<keyword id="KW-0963">Cytoplasm</keyword>
<keyword id="KW-0255">Endonuclease</keyword>
<keyword id="KW-0378">Hydrolase</keyword>
<keyword id="KW-0464">Manganese</keyword>
<keyword id="KW-0479">Metal-binding</keyword>
<keyword id="KW-0540">Nuclease</keyword>
<keyword id="KW-1185">Reference proteome</keyword>
<sequence>MVTIGVDEAGRGPLAGPVVAAAVVLCKPRPSGLDDSKKLSAARRAELEEKIKRRCRWAVGVVEPDEIDRLNIFGATMLAMTLAVGALCEQLAHDEDVGEVLVDGNLTPHGRRPEWCWPARPIVGGDALEPCISAASIIAKEHRDRLMREAALAHPHYGWERNAGYGTPEHLAALREHGPTPLHRRSFAPVAQLQLL</sequence>